<keyword id="KW-0025">Alternative splicing</keyword>
<keyword id="KW-0175">Coiled coil</keyword>
<keyword id="KW-0963">Cytoplasm</keyword>
<keyword id="KW-1017">Isopeptide bond</keyword>
<keyword id="KW-0488">Methylation</keyword>
<keyword id="KW-0507">mRNA processing</keyword>
<keyword id="KW-0508">mRNA splicing</keyword>
<keyword id="KW-0539">Nucleus</keyword>
<keyword id="KW-0597">Phosphoprotein</keyword>
<keyword id="KW-1267">Proteomics identification</keyword>
<keyword id="KW-1185">Reference proteome</keyword>
<keyword id="KW-0694">RNA-binding</keyword>
<keyword id="KW-0804">Transcription</keyword>
<keyword id="KW-0805">Transcription regulation</keyword>
<keyword id="KW-0810">Translation regulation</keyword>
<keyword id="KW-0832">Ubl conjugation</keyword>
<protein>
    <recommendedName>
        <fullName evidence="17">Intracellular hyaluronan-binding protein 4</fullName>
        <shortName evidence="17">IHABP-4</shortName>
        <shortName evidence="17">IHABP4</shortName>
    </recommendedName>
    <alternativeName>
        <fullName evidence="27">Hyaluronan-binding protein 4</fullName>
    </alternativeName>
    <alternativeName>
        <fullName evidence="17 19">Ki-1/57 intracellular antigen</fullName>
    </alternativeName>
</protein>
<feature type="chain" id="PRO_0000257972" description="Intracellular hyaluronan-binding protein 4">
    <location>
        <begin position="1"/>
        <end position="413"/>
    </location>
</feature>
<feature type="region of interest" description="Disordered" evidence="5">
    <location>
        <begin position="42"/>
        <end position="206"/>
    </location>
</feature>
<feature type="region of interest" description="Disordered" evidence="5">
    <location>
        <begin position="227"/>
        <end position="320"/>
    </location>
</feature>
<feature type="region of interest" description="Disordered" evidence="5">
    <location>
        <begin position="360"/>
        <end position="413"/>
    </location>
</feature>
<feature type="coiled-coil region" evidence="4">
    <location>
        <begin position="40"/>
        <end position="64"/>
    </location>
</feature>
<feature type="compositionally biased region" description="Low complexity" evidence="5">
    <location>
        <begin position="62"/>
        <end position="82"/>
    </location>
</feature>
<feature type="compositionally biased region" description="Basic and acidic residues" evidence="5">
    <location>
        <begin position="87"/>
        <end position="97"/>
    </location>
</feature>
<feature type="compositionally biased region" description="Basic and acidic residues" evidence="5">
    <location>
        <begin position="139"/>
        <end position="182"/>
    </location>
</feature>
<feature type="compositionally biased region" description="Gly residues" evidence="5">
    <location>
        <begin position="184"/>
        <end position="201"/>
    </location>
</feature>
<feature type="compositionally biased region" description="Basic and acidic residues" evidence="5">
    <location>
        <begin position="294"/>
        <end position="315"/>
    </location>
</feature>
<feature type="compositionally biased region" description="Acidic residues" evidence="5">
    <location>
        <begin position="404"/>
        <end position="413"/>
    </location>
</feature>
<feature type="modified residue" description="Phosphoserine" evidence="3">
    <location>
        <position position="7"/>
    </location>
</feature>
<feature type="modified residue" description="Phosphoserine" evidence="3">
    <location>
        <position position="36"/>
    </location>
</feature>
<feature type="modified residue" description="Omega-N-methylarginine" evidence="31">
    <location>
        <position position="70"/>
    </location>
</feature>
<feature type="modified residue" description="Phosphoserine" evidence="28">
    <location>
        <position position="74"/>
    </location>
</feature>
<feature type="modified residue" description="Phosphoserine" evidence="29 30 32">
    <location>
        <position position="108"/>
    </location>
</feature>
<feature type="modified residue" description="Phosphothreonine; by PKC" evidence="21">
    <location>
        <position position="354"/>
    </location>
</feature>
<feature type="modified residue" description="Phosphothreonine; by PKC" evidence="21">
    <location>
        <position position="375"/>
    </location>
</feature>
<feature type="cross-link" description="Glycyl lysine isopeptide (Lys-Gly) (interchain with G-Cter in SUMO1); alternate" evidence="15">
    <location>
        <position position="213"/>
    </location>
</feature>
<feature type="cross-link" description="Glycyl lysine isopeptide (Lys-Gly) (interchain with G-Cter in SUMO2); alternate" evidence="15">
    <location>
        <position position="213"/>
    </location>
</feature>
<feature type="cross-link" description="Glycyl lysine isopeptide (Lys-Gly) (interchain with G-Cter in SUMO1); alternate" evidence="15">
    <location>
        <position position="276"/>
    </location>
</feature>
<feature type="cross-link" description="Glycyl lysine isopeptide (Lys-Gly) (interchain with G-Cter in SUMO2); alternate" evidence="15">
    <location>
        <position position="276"/>
    </location>
</feature>
<feature type="cross-link" description="Glycyl lysine isopeptide (Lys-Gly) (interchain with G-Cter in SUMO1); alternate" evidence="15">
    <location>
        <position position="336"/>
    </location>
</feature>
<feature type="cross-link" description="Glycyl lysine isopeptide (Lys-Gly) (interchain with G-Cter in SUMO2); alternate" evidence="15">
    <location>
        <position position="336"/>
    </location>
</feature>
<feature type="splice variant" id="VSP_052194" description="In isoform 2." evidence="18">
    <location>
        <begin position="172"/>
        <end position="276"/>
    </location>
</feature>
<feature type="mutagenesis site" description="Decreases sumoylation; when associated with R-336. Abolishes sumoylation; when associated with R-276 and R-336." evidence="15">
    <original>K</original>
    <variation>R</variation>
    <location>
        <position position="213"/>
    </location>
</feature>
<feature type="mutagenesis site" description="Decreases sumoylation; when associated with R-336. Abolishes sumoylation; when associated with R-213 and R-336." evidence="15">
    <original>K</original>
    <variation>R</variation>
    <location>
        <position position="276"/>
    </location>
</feature>
<feature type="mutagenesis site" description="Decreases sumoylation; when associated with R-213 or R-276. Abolishes sumoylation; when associated with R-213 and R-276." evidence="15">
    <original>K</original>
    <variation>R</variation>
    <location>
        <position position="336"/>
    </location>
</feature>
<feature type="sequence conflict" description="In Ref. 1; AAF62546." evidence="20" ref="1">
    <original>Q</original>
    <variation>H</variation>
    <location>
        <position position="104"/>
    </location>
</feature>
<feature type="sequence conflict" description="In Ref. 4; AAC31117." evidence="20" ref="4">
    <original>A</original>
    <variation>S</variation>
    <location>
        <position position="115"/>
    </location>
</feature>
<feature type="sequence conflict" description="In Ref. 1; AAF62546 and 4; AAC31117." evidence="20" ref="1 4">
    <original>YG</original>
    <variation>NY</variation>
    <location>
        <begin position="388"/>
        <end position="389"/>
    </location>
</feature>
<accession>Q5JVS0</accession>
<accession>O75804</accession>
<accession>Q8WV33</accession>
<accession>Q9NYJ2</accession>
<gene>
    <name evidence="27" type="primary">HABP4</name>
</gene>
<name>HABP4_HUMAN</name>
<dbReference type="EMBL" id="AF241831">
    <property type="protein sequence ID" value="AAF62546.1"/>
    <property type="molecule type" value="mRNA"/>
</dbReference>
<dbReference type="EMBL" id="AL133477">
    <property type="status" value="NOT_ANNOTATED_CDS"/>
    <property type="molecule type" value="Genomic_DNA"/>
</dbReference>
<dbReference type="EMBL" id="BC018788">
    <property type="protein sequence ID" value="AAH18788.1"/>
    <property type="molecule type" value="mRNA"/>
</dbReference>
<dbReference type="EMBL" id="U77327">
    <property type="protein sequence ID" value="AAC31117.1"/>
    <property type="molecule type" value="mRNA"/>
</dbReference>
<dbReference type="CCDS" id="CCDS6719.1">
    <molecule id="Q5JVS0-1"/>
</dbReference>
<dbReference type="RefSeq" id="NP_055097.2">
    <molecule id="Q5JVS0-1"/>
    <property type="nucleotide sequence ID" value="NM_014282.4"/>
</dbReference>
<dbReference type="BioGRID" id="116587">
    <property type="interactions" value="161"/>
</dbReference>
<dbReference type="FunCoup" id="Q5JVS0">
    <property type="interactions" value="1025"/>
</dbReference>
<dbReference type="IntAct" id="Q5JVS0">
    <property type="interactions" value="56"/>
</dbReference>
<dbReference type="MINT" id="Q5JVS0"/>
<dbReference type="STRING" id="9606.ENSP00000364398"/>
<dbReference type="DrugBank" id="DB08818">
    <property type="generic name" value="Hyaluronic acid"/>
</dbReference>
<dbReference type="GlyGen" id="Q5JVS0">
    <property type="glycosylation" value="1 site"/>
</dbReference>
<dbReference type="iPTMnet" id="Q5JVS0"/>
<dbReference type="PhosphoSitePlus" id="Q5JVS0"/>
<dbReference type="BioMuta" id="HABP4"/>
<dbReference type="DMDM" id="74742472"/>
<dbReference type="jPOST" id="Q5JVS0"/>
<dbReference type="MassIVE" id="Q5JVS0"/>
<dbReference type="PaxDb" id="9606-ENSP00000364398"/>
<dbReference type="PeptideAtlas" id="Q5JVS0"/>
<dbReference type="ProteomicsDB" id="63346">
    <molecule id="Q5JVS0-1"/>
</dbReference>
<dbReference type="ProteomicsDB" id="63347">
    <molecule id="Q5JVS0-2"/>
</dbReference>
<dbReference type="Pumba" id="Q5JVS0"/>
<dbReference type="Antibodypedia" id="55498">
    <property type="antibodies" value="62 antibodies from 15 providers"/>
</dbReference>
<dbReference type="DNASU" id="22927"/>
<dbReference type="Ensembl" id="ENST00000375249.5">
    <molecule id="Q5JVS0-1"/>
    <property type="protein sequence ID" value="ENSP00000364398.4"/>
    <property type="gene ID" value="ENSG00000130956.14"/>
</dbReference>
<dbReference type="Ensembl" id="ENST00000375251.7">
    <molecule id="Q5JVS0-2"/>
    <property type="protein sequence ID" value="ENSP00000364400.3"/>
    <property type="gene ID" value="ENSG00000130956.14"/>
</dbReference>
<dbReference type="GeneID" id="22927"/>
<dbReference type="KEGG" id="hsa:22927"/>
<dbReference type="MANE-Select" id="ENST00000375249.5">
    <property type="protein sequence ID" value="ENSP00000364398.4"/>
    <property type="RefSeq nucleotide sequence ID" value="NM_014282.4"/>
    <property type="RefSeq protein sequence ID" value="NP_055097.2"/>
</dbReference>
<dbReference type="UCSC" id="uc010msg.5">
    <molecule id="Q5JVS0-1"/>
    <property type="organism name" value="human"/>
</dbReference>
<dbReference type="AGR" id="HGNC:17062"/>
<dbReference type="CTD" id="22927"/>
<dbReference type="DisGeNET" id="22927"/>
<dbReference type="GeneCards" id="HABP4"/>
<dbReference type="HGNC" id="HGNC:17062">
    <property type="gene designation" value="HABP4"/>
</dbReference>
<dbReference type="HPA" id="ENSG00000130956">
    <property type="expression patterns" value="Tissue enhanced (brain)"/>
</dbReference>
<dbReference type="MIM" id="617369">
    <property type="type" value="gene"/>
</dbReference>
<dbReference type="neXtProt" id="NX_Q5JVS0"/>
<dbReference type="OpenTargets" id="ENSG00000130956"/>
<dbReference type="PharmGKB" id="PA38434"/>
<dbReference type="VEuPathDB" id="HostDB:ENSG00000130956"/>
<dbReference type="eggNOG" id="KOG2945">
    <property type="taxonomic scope" value="Eukaryota"/>
</dbReference>
<dbReference type="GeneTree" id="ENSGT00520000055591"/>
<dbReference type="HOGENOM" id="CLU_037366_0_0_1"/>
<dbReference type="InParanoid" id="Q5JVS0"/>
<dbReference type="OMA" id="EEMNGFQ"/>
<dbReference type="OrthoDB" id="9485937at2759"/>
<dbReference type="PAN-GO" id="Q5JVS0">
    <property type="GO annotations" value="5 GO annotations based on evolutionary models"/>
</dbReference>
<dbReference type="PhylomeDB" id="Q5JVS0"/>
<dbReference type="TreeFam" id="TF318374"/>
<dbReference type="PathwayCommons" id="Q5JVS0"/>
<dbReference type="Reactome" id="R-HSA-114608">
    <property type="pathway name" value="Platelet degranulation"/>
</dbReference>
<dbReference type="SignaLink" id="Q5JVS0"/>
<dbReference type="SIGNOR" id="Q5JVS0"/>
<dbReference type="BioGRID-ORCS" id="22927">
    <property type="hits" value="10 hits in 1156 CRISPR screens"/>
</dbReference>
<dbReference type="CD-CODE" id="462A97B5">
    <property type="entry name" value="Leucocyte nuclear body"/>
</dbReference>
<dbReference type="CD-CODE" id="6F24707C">
    <property type="entry name" value="Cajal body"/>
</dbReference>
<dbReference type="CD-CODE" id="804901D1">
    <property type="entry name" value="Nuclear speckle"/>
</dbReference>
<dbReference type="CD-CODE" id="91857CE7">
    <property type="entry name" value="Nucleolus"/>
</dbReference>
<dbReference type="CD-CODE" id="DEE660B4">
    <property type="entry name" value="Stress granule"/>
</dbReference>
<dbReference type="ChiTaRS" id="HABP4">
    <property type="organism name" value="human"/>
</dbReference>
<dbReference type="GeneWiki" id="HABP4"/>
<dbReference type="GenomeRNAi" id="22927"/>
<dbReference type="Pharos" id="Q5JVS0">
    <property type="development level" value="Tbio"/>
</dbReference>
<dbReference type="PRO" id="PR:Q5JVS0"/>
<dbReference type="Proteomes" id="UP000005640">
    <property type="component" value="Chromosome 9"/>
</dbReference>
<dbReference type="RNAct" id="Q5JVS0">
    <property type="molecule type" value="protein"/>
</dbReference>
<dbReference type="Bgee" id="ENSG00000130956">
    <property type="expression patterns" value="Expressed in endothelial cell and 196 other cell types or tissues"/>
</dbReference>
<dbReference type="GO" id="GO:0015030">
    <property type="term" value="C:Cajal body"/>
    <property type="evidence" value="ECO:0000314"/>
    <property type="project" value="UniProtKB"/>
</dbReference>
<dbReference type="GO" id="GO:0005737">
    <property type="term" value="C:cytoplasm"/>
    <property type="evidence" value="ECO:0000314"/>
    <property type="project" value="UniProtKB"/>
</dbReference>
<dbReference type="GO" id="GO:0010494">
    <property type="term" value="C:cytoplasmic stress granule"/>
    <property type="evidence" value="ECO:0000314"/>
    <property type="project" value="UniProtKB"/>
</dbReference>
<dbReference type="GO" id="GO:0005829">
    <property type="term" value="C:cytosol"/>
    <property type="evidence" value="ECO:0000314"/>
    <property type="project" value="HPA"/>
</dbReference>
<dbReference type="GO" id="GO:0005576">
    <property type="term" value="C:extracellular region"/>
    <property type="evidence" value="ECO:0000304"/>
    <property type="project" value="Reactome"/>
</dbReference>
<dbReference type="GO" id="GO:0097504">
    <property type="term" value="C:Gemini of Cajal bodies"/>
    <property type="evidence" value="ECO:0000314"/>
    <property type="project" value="UniProtKB"/>
</dbReference>
<dbReference type="GO" id="GO:0031965">
    <property type="term" value="C:nuclear membrane"/>
    <property type="evidence" value="ECO:0000314"/>
    <property type="project" value="HPA"/>
</dbReference>
<dbReference type="GO" id="GO:0016607">
    <property type="term" value="C:nuclear speck"/>
    <property type="evidence" value="ECO:0000314"/>
    <property type="project" value="UniProtKB"/>
</dbReference>
<dbReference type="GO" id="GO:0005730">
    <property type="term" value="C:nucleolus"/>
    <property type="evidence" value="ECO:0000314"/>
    <property type="project" value="UniProtKB"/>
</dbReference>
<dbReference type="GO" id="GO:0005634">
    <property type="term" value="C:nucleus"/>
    <property type="evidence" value="ECO:0000314"/>
    <property type="project" value="UniProtKB"/>
</dbReference>
<dbReference type="GO" id="GO:0030017">
    <property type="term" value="C:sarcomere"/>
    <property type="evidence" value="ECO:0000250"/>
    <property type="project" value="UniProtKB"/>
</dbReference>
<dbReference type="GO" id="GO:0016528">
    <property type="term" value="C:sarcoplasm"/>
    <property type="evidence" value="ECO:0007669"/>
    <property type="project" value="UniProtKB-SubCell"/>
</dbReference>
<dbReference type="GO" id="GO:0043022">
    <property type="term" value="F:ribosome binding"/>
    <property type="evidence" value="ECO:0000250"/>
    <property type="project" value="UniProtKB"/>
</dbReference>
<dbReference type="GO" id="GO:0003723">
    <property type="term" value="F:RNA binding"/>
    <property type="evidence" value="ECO:0000318"/>
    <property type="project" value="GO_Central"/>
</dbReference>
<dbReference type="GO" id="GO:0032183">
    <property type="term" value="F:SUMO binding"/>
    <property type="evidence" value="ECO:0000314"/>
    <property type="project" value="UniProtKB"/>
</dbReference>
<dbReference type="GO" id="GO:0061770">
    <property type="term" value="F:translation elongation factor binding"/>
    <property type="evidence" value="ECO:0000250"/>
    <property type="project" value="UniProtKB"/>
</dbReference>
<dbReference type="GO" id="GO:0071260">
    <property type="term" value="P:cellular response to mechanical stimulus"/>
    <property type="evidence" value="ECO:0000250"/>
    <property type="project" value="UniProtKB"/>
</dbReference>
<dbReference type="GO" id="GO:0006397">
    <property type="term" value="P:mRNA processing"/>
    <property type="evidence" value="ECO:0007669"/>
    <property type="project" value="UniProtKB-KW"/>
</dbReference>
<dbReference type="GO" id="GO:0030578">
    <property type="term" value="P:PML body organization"/>
    <property type="evidence" value="ECO:0000314"/>
    <property type="project" value="UniProtKB"/>
</dbReference>
<dbReference type="GO" id="GO:0033120">
    <property type="term" value="P:positive regulation of RNA splicing"/>
    <property type="evidence" value="ECO:0000315"/>
    <property type="project" value="UniProtKB"/>
</dbReference>
<dbReference type="GO" id="GO:0045948">
    <property type="term" value="P:positive regulation of translational initiation"/>
    <property type="evidence" value="ECO:0000315"/>
    <property type="project" value="UniProtKB"/>
</dbReference>
<dbReference type="GO" id="GO:0141014">
    <property type="term" value="P:ribosome hibernation"/>
    <property type="evidence" value="ECO:0000250"/>
    <property type="project" value="UniProtKB"/>
</dbReference>
<dbReference type="GO" id="GO:0008380">
    <property type="term" value="P:RNA splicing"/>
    <property type="evidence" value="ECO:0007669"/>
    <property type="project" value="UniProtKB-KW"/>
</dbReference>
<dbReference type="InterPro" id="IPR039764">
    <property type="entry name" value="HABP4/SERBP1-like"/>
</dbReference>
<dbReference type="InterPro" id="IPR006861">
    <property type="entry name" value="HABP4_PAIRBP1-bd"/>
</dbReference>
<dbReference type="InterPro" id="IPR032381">
    <property type="entry name" value="IHABP4_N"/>
</dbReference>
<dbReference type="PANTHER" id="PTHR12299">
    <property type="entry name" value="HYALURONIC ACID-BINDING PROTEIN 4"/>
    <property type="match status" value="1"/>
</dbReference>
<dbReference type="PANTHER" id="PTHR12299:SF30">
    <property type="entry name" value="INTRACELLULAR HYALURONAN-BINDING PROTEIN 4"/>
    <property type="match status" value="1"/>
</dbReference>
<dbReference type="Pfam" id="PF04774">
    <property type="entry name" value="HABP4_PAI-RBP1"/>
    <property type="match status" value="1"/>
</dbReference>
<dbReference type="Pfam" id="PF16174">
    <property type="entry name" value="IHABP4_N"/>
    <property type="match status" value="2"/>
</dbReference>
<dbReference type="SMART" id="SM01233">
    <property type="entry name" value="HABP4_PAI-RBP1"/>
    <property type="match status" value="1"/>
</dbReference>
<reference evidence="20 24" key="1">
    <citation type="journal article" date="2000" name="J. Biol. Chem.">
        <title>Molecular characterization of a novel intracellular hyaluronan-binding protein.</title>
        <authorList>
            <person name="Huang L."/>
            <person name="Grammatikakis N."/>
            <person name="Yoneda M."/>
            <person name="Banerjee S.D."/>
            <person name="Toole B.P."/>
        </authorList>
    </citation>
    <scope>NUCLEOTIDE SEQUENCE [MRNA] (ISOFORM 1)</scope>
</reference>
<reference evidence="26" key="2">
    <citation type="journal article" date="2004" name="Nature">
        <title>DNA sequence and analysis of human chromosome 9.</title>
        <authorList>
            <person name="Humphray S.J."/>
            <person name="Oliver K."/>
            <person name="Hunt A.R."/>
            <person name="Plumb R.W."/>
            <person name="Loveland J.E."/>
            <person name="Howe K.L."/>
            <person name="Andrews T.D."/>
            <person name="Searle S."/>
            <person name="Hunt S.E."/>
            <person name="Scott C.E."/>
            <person name="Jones M.C."/>
            <person name="Ainscough R."/>
            <person name="Almeida J.P."/>
            <person name="Ambrose K.D."/>
            <person name="Ashwell R.I.S."/>
            <person name="Babbage A.K."/>
            <person name="Babbage S."/>
            <person name="Bagguley C.L."/>
            <person name="Bailey J."/>
            <person name="Banerjee R."/>
            <person name="Barker D.J."/>
            <person name="Barlow K.F."/>
            <person name="Bates K."/>
            <person name="Beasley H."/>
            <person name="Beasley O."/>
            <person name="Bird C.P."/>
            <person name="Bray-Allen S."/>
            <person name="Brown A.J."/>
            <person name="Brown J.Y."/>
            <person name="Burford D."/>
            <person name="Burrill W."/>
            <person name="Burton J."/>
            <person name="Carder C."/>
            <person name="Carter N.P."/>
            <person name="Chapman J.C."/>
            <person name="Chen Y."/>
            <person name="Clarke G."/>
            <person name="Clark S.Y."/>
            <person name="Clee C.M."/>
            <person name="Clegg S."/>
            <person name="Collier R.E."/>
            <person name="Corby N."/>
            <person name="Crosier M."/>
            <person name="Cummings A.T."/>
            <person name="Davies J."/>
            <person name="Dhami P."/>
            <person name="Dunn M."/>
            <person name="Dutta I."/>
            <person name="Dyer L.W."/>
            <person name="Earthrowl M.E."/>
            <person name="Faulkner L."/>
            <person name="Fleming C.J."/>
            <person name="Frankish A."/>
            <person name="Frankland J.A."/>
            <person name="French L."/>
            <person name="Fricker D.G."/>
            <person name="Garner P."/>
            <person name="Garnett J."/>
            <person name="Ghori J."/>
            <person name="Gilbert J.G.R."/>
            <person name="Glison C."/>
            <person name="Grafham D.V."/>
            <person name="Gribble S."/>
            <person name="Griffiths C."/>
            <person name="Griffiths-Jones S."/>
            <person name="Grocock R."/>
            <person name="Guy J."/>
            <person name="Hall R.E."/>
            <person name="Hammond S."/>
            <person name="Harley J.L."/>
            <person name="Harrison E.S.I."/>
            <person name="Hart E.A."/>
            <person name="Heath P.D."/>
            <person name="Henderson C.D."/>
            <person name="Hopkins B.L."/>
            <person name="Howard P.J."/>
            <person name="Howden P.J."/>
            <person name="Huckle E."/>
            <person name="Johnson C."/>
            <person name="Johnson D."/>
            <person name="Joy A.A."/>
            <person name="Kay M."/>
            <person name="Keenan S."/>
            <person name="Kershaw J.K."/>
            <person name="Kimberley A.M."/>
            <person name="King A."/>
            <person name="Knights A."/>
            <person name="Laird G.K."/>
            <person name="Langford C."/>
            <person name="Lawlor S."/>
            <person name="Leongamornlert D.A."/>
            <person name="Leversha M."/>
            <person name="Lloyd C."/>
            <person name="Lloyd D.M."/>
            <person name="Lovell J."/>
            <person name="Martin S."/>
            <person name="Mashreghi-Mohammadi M."/>
            <person name="Matthews L."/>
            <person name="McLaren S."/>
            <person name="McLay K.E."/>
            <person name="McMurray A."/>
            <person name="Milne S."/>
            <person name="Nickerson T."/>
            <person name="Nisbett J."/>
            <person name="Nordsiek G."/>
            <person name="Pearce A.V."/>
            <person name="Peck A.I."/>
            <person name="Porter K.M."/>
            <person name="Pandian R."/>
            <person name="Pelan S."/>
            <person name="Phillimore B."/>
            <person name="Povey S."/>
            <person name="Ramsey Y."/>
            <person name="Rand V."/>
            <person name="Scharfe M."/>
            <person name="Sehra H.K."/>
            <person name="Shownkeen R."/>
            <person name="Sims S.K."/>
            <person name="Skuce C.D."/>
            <person name="Smith M."/>
            <person name="Steward C.A."/>
            <person name="Swarbreck D."/>
            <person name="Sycamore N."/>
            <person name="Tester J."/>
            <person name="Thorpe A."/>
            <person name="Tracey A."/>
            <person name="Tromans A."/>
            <person name="Thomas D.W."/>
            <person name="Wall M."/>
            <person name="Wallis J.M."/>
            <person name="West A.P."/>
            <person name="Whitehead S.L."/>
            <person name="Willey D.L."/>
            <person name="Williams S.A."/>
            <person name="Wilming L."/>
            <person name="Wray P.W."/>
            <person name="Young L."/>
            <person name="Ashurst J.L."/>
            <person name="Coulson A."/>
            <person name="Blocker H."/>
            <person name="Durbin R.M."/>
            <person name="Sulston J.E."/>
            <person name="Hubbard T."/>
            <person name="Jackson M.J."/>
            <person name="Bentley D.R."/>
            <person name="Beck S."/>
            <person name="Rogers J."/>
            <person name="Dunham I."/>
        </authorList>
    </citation>
    <scope>NUCLEOTIDE SEQUENCE [LARGE SCALE GENOMIC DNA]</scope>
</reference>
<reference evidence="20 25" key="3">
    <citation type="journal article" date="2004" name="Genome Res.">
        <title>The status, quality, and expansion of the NIH full-length cDNA project: the Mammalian Gene Collection (MGC).</title>
        <authorList>
            <consortium name="The MGC Project Team"/>
        </authorList>
    </citation>
    <scope>NUCLEOTIDE SEQUENCE [LARGE SCALE MRNA] (ISOFORM 2)</scope>
    <source>
        <tissue evidence="25">Brain</tissue>
    </source>
</reference>
<reference evidence="20 23" key="4">
    <citation type="journal article" date="1997" name="Exp. Clin. Immunogenet.">
        <title>Characterization, mapping and partial cDNA sequence of the 57-kD intracellular Ki-1 antigen.</title>
        <authorList>
            <person name="Kobarg J."/>
            <person name="Schnittger S."/>
            <person name="Fonatsch C."/>
            <person name="Lemke H."/>
            <person name="Bowen M.A."/>
            <person name="Buck F."/>
            <person name="Hansen H.P."/>
        </authorList>
    </citation>
    <scope>NUCLEOTIDE SEQUENCE [MRNA] OF 115-413 (ISOFORM 1)</scope>
    <scope>SUBCELLULAR LOCATION</scope>
    <scope>TISSUE SPECIFICITY</scope>
</reference>
<reference evidence="20" key="5">
    <citation type="journal article" date="2003" name="FEBS Lett.">
        <title>Characterization of a new family of proteins that interact with the C-terminal region of the chromatin-remodeling factor CHD-3.</title>
        <authorList>
            <person name="Lemos T.A."/>
            <person name="Passos D.O."/>
            <person name="Nery F.C."/>
            <person name="Kobarg J."/>
        </authorList>
    </citation>
    <scope>INTERACTION WITH CHD3</scope>
    <scope>TISSUE SPECIFICITY</scope>
</reference>
<reference evidence="20" key="6">
    <citation type="journal article" date="2004" name="J. Biol. Chem.">
        <title>Ki-1/57 interacts with RACK1 and is a substrate for the phosphorylation by phorbol 12-myristate 13-acetate-activated protein kinase C.</title>
        <authorList>
            <person name="Nery F.C."/>
            <person name="Passos D.O."/>
            <person name="Garcia V.S."/>
            <person name="Kobarg J."/>
        </authorList>
    </citation>
    <scope>FUNCTION</scope>
    <scope>INTERACTION WITH RACK1</scope>
    <scope>SUBCELLULAR LOCATION</scope>
    <scope>PHOSPHORYLATION AT THR-354 AND THR-375</scope>
</reference>
<reference key="7">
    <citation type="journal article" date="2005" name="FEBS Lett.">
        <title>MEF2C DNA-binding activity is inhibited through its interaction with the regulatory protein Ki-1/57.</title>
        <authorList>
            <person name="Kobarg C.B."/>
            <person name="Kobarg J."/>
            <person name="Crosara-Alberto D.P."/>
            <person name="Theizen T.H."/>
            <person name="Franchini K.G."/>
        </authorList>
    </citation>
    <scope>INTERACTION WITH MEF2C</scope>
</reference>
<reference key="8">
    <citation type="journal article" date="2006" name="Biochem. Biophys. Res. Commun.">
        <title>Evidence for the interaction of the regulatory protein Ki-1/57 with p53 and its interacting proteins.</title>
        <authorList>
            <person name="Nery F.C."/>
            <person name="Rui E."/>
            <person name="Kuniyoshi T.M."/>
            <person name="Kobarg J."/>
        </authorList>
    </citation>
    <scope>FUNCTION</scope>
    <scope>INTERACTION WITH TP53</scope>
    <scope>SUBCELLULAR LOCATION</scope>
</reference>
<reference key="9">
    <citation type="journal article" date="2006" name="FEBS J.">
        <title>Ki-1/57 interacts with PRMT1 and is a substrate for arginine methylation.</title>
        <authorList>
            <person name="Passos D.O."/>
            <person name="Bressan G.C."/>
            <person name="Nery F.C."/>
            <person name="Kobarg J."/>
        </authorList>
    </citation>
    <scope>METHYLATION BY PRMT1</scope>
    <scope>INTERACTION WITH PRMT1</scope>
    <scope>SUBCELLULAR LOCATION</scope>
    <scope>REGION</scope>
</reference>
<reference key="10">
    <citation type="journal article" date="2008" name="Proc. Natl. Acad. Sci. U.S.A.">
        <title>A quantitative atlas of mitotic phosphorylation.</title>
        <authorList>
            <person name="Dephoure N."/>
            <person name="Zhou C."/>
            <person name="Villen J."/>
            <person name="Beausoleil S.A."/>
            <person name="Bakalarski C.E."/>
            <person name="Elledge S.J."/>
            <person name="Gygi S.P."/>
        </authorList>
    </citation>
    <scope>IDENTIFICATION BY MASS SPECTROMETRY [LARGE SCALE ANALYSIS]</scope>
    <source>
        <tissue>Cervix carcinoma</tissue>
    </source>
</reference>
<reference key="11">
    <citation type="journal article" date="2009" name="FEBS J.">
        <title>Functional association of human Ki-1/57 with pre-mRNA splicing events.</title>
        <authorList>
            <person name="Bressan G.C."/>
            <person name="Quaresma A.J."/>
            <person name="Moraes E.C."/>
            <person name="Manfiolli A.O."/>
            <person name="Passos D.O."/>
            <person name="Gomes M.D."/>
            <person name="Kobarg J."/>
        </authorList>
    </citation>
    <scope>FUNCTION IN MRNA SPLICING</scope>
    <scope>INTERACTION WITH SRSF9 AND SYNCRIP</scope>
    <scope>SUBCELLULAR LOCATION</scope>
</reference>
<reference key="12">
    <citation type="journal article" date="2010" name="Sci. Signal.">
        <title>Quantitative phosphoproteomics reveals widespread full phosphorylation site occupancy during mitosis.</title>
        <authorList>
            <person name="Olsen J.V."/>
            <person name="Vermeulen M."/>
            <person name="Santamaria A."/>
            <person name="Kumar C."/>
            <person name="Miller M.L."/>
            <person name="Jensen L.J."/>
            <person name="Gnad F."/>
            <person name="Cox J."/>
            <person name="Jensen T.S."/>
            <person name="Nigg E.A."/>
            <person name="Brunak S."/>
            <person name="Mann M."/>
        </authorList>
    </citation>
    <scope>PHOSPHORYLATION [LARGE SCALE ANALYSIS] AT SER-74</scope>
    <scope>IDENTIFICATION BY MASS SPECTROMETRY [LARGE SCALE ANALYSIS]</scope>
    <source>
        <tissue>Cervix carcinoma</tissue>
    </source>
</reference>
<reference key="13">
    <citation type="journal article" date="2011" name="FEBS Lett.">
        <title>Evidence for the association of the human regulatory protein Ki-1/57 with the translational machinery.</title>
        <authorList>
            <person name="Goncalves K.A."/>
            <person name="Bressan G.C."/>
            <person name="Saito A."/>
            <person name="Morello L.G."/>
            <person name="Zanchin N.I."/>
            <person name="Kobarg J."/>
        </authorList>
    </citation>
    <scope>FUNCTION IN MRNA TRANSLATION</scope>
    <scope>INTERACTION WITH FMR1; FXR1; FXR2 AND POLYSOMES</scope>
    <scope>SUBCELLULAR LOCATION</scope>
</reference>
<reference key="14">
    <citation type="journal article" date="2011" name="Sci. Signal.">
        <title>System-wide temporal characterization of the proteome and phosphoproteome of human embryonic stem cell differentiation.</title>
        <authorList>
            <person name="Rigbolt K.T."/>
            <person name="Prokhorova T.A."/>
            <person name="Akimov V."/>
            <person name="Henningsen J."/>
            <person name="Johansen P.T."/>
            <person name="Kratchmarova I."/>
            <person name="Kassem M."/>
            <person name="Mann M."/>
            <person name="Olsen J.V."/>
            <person name="Blagoev B."/>
        </authorList>
    </citation>
    <scope>PHOSPHORYLATION [LARGE SCALE ANALYSIS] AT SER-108</scope>
    <scope>IDENTIFICATION BY MASS SPECTROMETRY [LARGE SCALE ANALYSIS]</scope>
</reference>
<reference key="15">
    <citation type="journal article" date="2013" name="J. Proteome Res.">
        <title>Toward a comprehensive characterization of a human cancer cell phosphoproteome.</title>
        <authorList>
            <person name="Zhou H."/>
            <person name="Di Palma S."/>
            <person name="Preisinger C."/>
            <person name="Peng M."/>
            <person name="Polat A.N."/>
            <person name="Heck A.J."/>
            <person name="Mohammed S."/>
        </authorList>
    </citation>
    <scope>PHOSPHORYLATION [LARGE SCALE ANALYSIS] AT SER-108</scope>
    <scope>IDENTIFICATION BY MASS SPECTROMETRY [LARGE SCALE ANALYSIS]</scope>
    <source>
        <tissue>Cervix carcinoma</tissue>
    </source>
</reference>
<reference key="16">
    <citation type="journal article" date="2014" name="J. Proteomics">
        <title>An enzyme assisted RP-RPLC approach for in-depth analysis of human liver phosphoproteome.</title>
        <authorList>
            <person name="Bian Y."/>
            <person name="Song C."/>
            <person name="Cheng K."/>
            <person name="Dong M."/>
            <person name="Wang F."/>
            <person name="Huang J."/>
            <person name="Sun D."/>
            <person name="Wang L."/>
            <person name="Ye M."/>
            <person name="Zou H."/>
        </authorList>
    </citation>
    <scope>PHOSPHORYLATION [LARGE SCALE ANALYSIS] AT SER-108</scope>
    <scope>IDENTIFICATION BY MASS SPECTROMETRY [LARGE SCALE ANALYSIS]</scope>
    <source>
        <tissue>Liver</tissue>
    </source>
</reference>
<reference key="17">
    <citation type="journal article" date="2014" name="Mol. Cell. Proteomics">
        <title>Immunoaffinity enrichment and mass spectrometry analysis of protein methylation.</title>
        <authorList>
            <person name="Guo A."/>
            <person name="Gu H."/>
            <person name="Zhou J."/>
            <person name="Mulhern D."/>
            <person name="Wang Y."/>
            <person name="Lee K.A."/>
            <person name="Yang V."/>
            <person name="Aguiar M."/>
            <person name="Kornhauser J."/>
            <person name="Jia X."/>
            <person name="Ren J."/>
            <person name="Beausoleil S.A."/>
            <person name="Silva J.C."/>
            <person name="Vemulapalli V."/>
            <person name="Bedford M.T."/>
            <person name="Comb M.J."/>
        </authorList>
    </citation>
    <scope>METHYLATION [LARGE SCALE ANALYSIS] AT ARG-70</scope>
    <scope>IDENTIFICATION BY MASS SPECTROMETRY [LARGE SCALE ANALYSIS]</scope>
    <source>
        <tissue>Colon carcinoma</tissue>
    </source>
</reference>
<reference key="18">
    <citation type="journal article" date="2017" name="J. Proteome Res.">
        <title>Human Regulatory Protein Ki-1/57 Is a Target of SUMOylation and Affects PML Nuclear Body Formation.</title>
        <authorList>
            <person name="Saito A."/>
            <person name="Souza E.E."/>
            <person name="Costa F.C."/>
            <person name="Meirelles G.V."/>
            <person name="Goncalves K.A."/>
            <person name="Santos M.T."/>
            <person name="Bressan G.C."/>
            <person name="McComb M.E."/>
            <person name="Costello C.E."/>
            <person name="Whelan S.A."/>
            <person name="Kobarg J."/>
        </authorList>
    </citation>
    <scope>SUMOYLATION AT LYS-213; LYS-276 AND LYS-336</scope>
    <scope>MUTAGENESIS OF LYS-213; LYS-276 AND LYS-336</scope>
</reference>
<evidence type="ECO:0000250" key="1">
    <source>
        <dbReference type="UniProtKB" id="A1L1K8"/>
    </source>
</evidence>
<evidence type="ECO:0000250" key="2">
    <source>
        <dbReference type="UniProtKB" id="Q5XJA5"/>
    </source>
</evidence>
<evidence type="ECO:0000250" key="3">
    <source>
        <dbReference type="UniProtKB" id="Q9JKS5"/>
    </source>
</evidence>
<evidence type="ECO:0000255" key="4"/>
<evidence type="ECO:0000256" key="5">
    <source>
        <dbReference type="SAM" id="MobiDB-lite"/>
    </source>
</evidence>
<evidence type="ECO:0000269" key="6">
    <source>
    </source>
</evidence>
<evidence type="ECO:0000269" key="7">
    <source>
    </source>
</evidence>
<evidence type="ECO:0000269" key="8">
    <source>
    </source>
</evidence>
<evidence type="ECO:0000269" key="9">
    <source>
    </source>
</evidence>
<evidence type="ECO:0000269" key="10">
    <source>
    </source>
</evidence>
<evidence type="ECO:0000269" key="11">
    <source>
    </source>
</evidence>
<evidence type="ECO:0000269" key="12">
    <source>
    </source>
</evidence>
<evidence type="ECO:0000269" key="13">
    <source>
    </source>
</evidence>
<evidence type="ECO:0000269" key="14">
    <source>
    </source>
</evidence>
<evidence type="ECO:0000269" key="15">
    <source>
    </source>
</evidence>
<evidence type="ECO:0000269" key="16">
    <source>
    </source>
</evidence>
<evidence type="ECO:0000303" key="17">
    <source>
    </source>
</evidence>
<evidence type="ECO:0000303" key="18">
    <source>
    </source>
</evidence>
<evidence type="ECO:0000303" key="19">
    <source>
    </source>
</evidence>
<evidence type="ECO:0000305" key="20"/>
<evidence type="ECO:0000305" key="21">
    <source>
    </source>
</evidence>
<evidence type="ECO:0000305" key="22">
    <source>
    </source>
</evidence>
<evidence type="ECO:0000312" key="23">
    <source>
        <dbReference type="EMBL" id="AAC31117.1"/>
    </source>
</evidence>
<evidence type="ECO:0000312" key="24">
    <source>
        <dbReference type="EMBL" id="AAF62546.1"/>
    </source>
</evidence>
<evidence type="ECO:0000312" key="25">
    <source>
        <dbReference type="EMBL" id="AAH18788.1"/>
    </source>
</evidence>
<evidence type="ECO:0000312" key="26">
    <source>
        <dbReference type="EMBL" id="AL133477"/>
    </source>
</evidence>
<evidence type="ECO:0000312" key="27">
    <source>
        <dbReference type="HGNC" id="HGNC:17062"/>
    </source>
</evidence>
<evidence type="ECO:0007744" key="28">
    <source>
    </source>
</evidence>
<evidence type="ECO:0007744" key="29">
    <source>
    </source>
</evidence>
<evidence type="ECO:0007744" key="30">
    <source>
    </source>
</evidence>
<evidence type="ECO:0007744" key="31">
    <source>
    </source>
</evidence>
<evidence type="ECO:0007744" key="32">
    <source>
    </source>
</evidence>
<organism>
    <name type="scientific">Homo sapiens</name>
    <name type="common">Human</name>
    <dbReference type="NCBI Taxonomy" id="9606"/>
    <lineage>
        <taxon>Eukaryota</taxon>
        <taxon>Metazoa</taxon>
        <taxon>Chordata</taxon>
        <taxon>Craniata</taxon>
        <taxon>Vertebrata</taxon>
        <taxon>Euteleostomi</taxon>
        <taxon>Mammalia</taxon>
        <taxon>Eutheria</taxon>
        <taxon>Euarchontoglires</taxon>
        <taxon>Primates</taxon>
        <taxon>Haplorrhini</taxon>
        <taxon>Catarrhini</taxon>
        <taxon>Hominidae</taxon>
        <taxon>Homo</taxon>
    </lineage>
</organism>
<sequence>MKGALGSPVAAAGAAMQESFGCVVANRFHQLLDDESDPFDILREAERRRQQQLQRKRRDEAAAAAGAGPRGGRSPAGASGHRAGAGGRRESQKERKSLPAPVAQRPDSPGGGLQAPGQKRTPRRGEQQGWNDSRGPEGMLERAERRSYREYRPYETERQADFTAEKFPDEKPGDRFDRDRPLRGRGGPRGGMRGRGRGGPGNRVFDAFDQRGKREFERYGGNDKIAVRTEDNMGGCGVRTWGSGKDTSDVEPTAPMEEPTVVEESQGTPEEESPAKVPELEVEEETQVQEMTLDEWKNLQEQTRPKPEFNIRKPESTVPSKAVVIHKSKYRDDMVKDDYEDDSHVFRKPANDITSQLEINFGNLPRPGRGARGGTRGGRGRIRRAENYGPRAEVVMQDVAPNPDDPEDFPALS</sequence>
<proteinExistence type="evidence at protein level"/>
<comment type="function">
    <text evidence="1 2 8 11 13 14 15">Ribosome-binding protein that promotes ribosome hibernation, a process during which ribosomes are stabilized in an inactive state and preserved from proteasomal degradation (By similarity). Acts via its association with EEF2/eEF2 factor at the A-site of the ribosome, promoting ribosome stabilization in an inactive state compatible with storage (By similarity). Plays a key role in ribosome hibernation in the mature oocyte by promoting ribosome stabilization (By similarity). Ribosomes, which are produced in large quantities during oogenesis, are stored and translationally repressed in the oocyte and early embryo (By similarity). Also binds RNA, regulating transcription and pre-mRNA splicing (PubMed:14699138, PubMed:16455055, PubMed:19523114, PubMed:21771594). Binds (via C-terminus) to poly(U) RNA (PubMed:19523114). Seems to play a role in PML-nuclear bodies formation (PubMed:28695742). Negatively regulates DNA-binding activity of the transcription factor MEF2C in myocardial cells in response to mechanical stress (By similarity).</text>
</comment>
<comment type="subunit">
    <text evidence="2 3 7 8 10 11 12 13 14 22">Associates with ribosomes; promoting ribosome stabilization (PubMed:21771594). Interacts with EEF2/eEF2; promoting ribosome stabilization (By similarity). Interacts with FMR1 (PubMed:21771594). Interacts with FXR1 and FXR2 (PubMed:21771594). Interacts with CHD3 (via C-terminus) (PubMed:12505151). Interacts (via C-terminus) with RACK1 (PubMed:14699138). Interacts with p53/TP53 (PubMed:16455055). Interacts (via N-terminus) with SRSF9; this interaction is direct (PubMed:19523114). Interacts with SYNCRIP; this interaction is direct (PubMed:19523114). Interacts with MEF2C (via N-terminus); this interaction decreases DNA-binding activity of MEF2C in myocardial cells in response to mechanical stress (PubMed:15862299). Interacts with PRMT1 (via N-terminus) (PubMed:16879614). Interacts with SPIN1 (By similarity).</text>
</comment>
<comment type="interaction">
    <interactant intactId="EBI-523625">
        <id>Q5JVS0</id>
    </interactant>
    <interactant intactId="EBI-78738">
        <id>Q99873</id>
        <label>PRMT1</label>
    </interactant>
    <organismsDiffer>false</organismsDiffer>
    <experiments>2</experiments>
</comment>
<comment type="interaction">
    <interactant intactId="EBI-523625">
        <id>Q5JVS0</id>
    </interactant>
    <interactant intactId="EBI-2949710">
        <id>Q13242</id>
        <label>SRSF9</label>
    </interactant>
    <organismsDiffer>false</organismsDiffer>
    <experiments>2</experiments>
</comment>
<comment type="interaction">
    <interactant intactId="EBI-523625">
        <id>Q5JVS0</id>
    </interactant>
    <interactant intactId="EBI-1024357">
        <id>O60506</id>
        <label>SYNCRIP</label>
    </interactant>
    <organismsDiffer>false</organismsDiffer>
    <experiments>2</experiments>
</comment>
<comment type="subcellular location">
    <subcellularLocation>
        <location evidence="8 11 12 13 16">Nucleus</location>
    </subcellularLocation>
    <subcellularLocation>
        <location evidence="8 11 12 13 16">Cytoplasm</location>
    </subcellularLocation>
    <subcellularLocation>
        <location evidence="14">Cytoplasm</location>
        <location evidence="14">Stress granule</location>
    </subcellularLocation>
    <subcellularLocation>
        <location evidence="1">Cytoplasm</location>
        <location evidence="1">Sarcoplasm</location>
    </subcellularLocation>
    <subcellularLocation>
        <location evidence="13">Nucleus</location>
        <location evidence="13">Nuclear body</location>
    </subcellularLocation>
    <subcellularLocation>
        <location evidence="13">Nucleus</location>
        <location evidence="13">Nucleolus</location>
    </subcellularLocation>
    <subcellularLocation>
        <location evidence="13">Nucleus speckle</location>
    </subcellularLocation>
    <subcellularLocation>
        <location evidence="13">Nucleus</location>
        <location evidence="13">Cajal body</location>
    </subcellularLocation>
    <subcellularLocation>
        <location evidence="13">Nucleus</location>
        <location evidence="13">Gem</location>
    </subcellularLocation>
    <text evidence="1 12 13 14 16">Transported into the nuclear compartment in activated leukocytes (PubMed:9523163). Inhibition of methylation alters its distribution between the nuclear and cytoplasmic compartments (PubMed:16879614, PubMed:19523114). Methylation may be required for its localization in subnuclear structures, such as nucleoli, nuclear speckles, Cajal bodies and Gemini of coiled bodies (gems) (PubMed:19523114). Colocalizes with FMR1, FXR1 and FXR2 in cytoplasmic stress granules (PubMed:21771594). In myocardial cells, localization at the sarcoplasm is reduced in response to mechanical stress (By similarity).</text>
</comment>
<comment type="alternative products">
    <event type="alternative splicing"/>
    <isoform>
        <id>Q5JVS0-1</id>
        <name evidence="6 16">1</name>
        <sequence type="displayed"/>
    </isoform>
    <isoform>
        <id>Q5JVS0-2</id>
        <name evidence="9">2</name>
        <sequence type="described" ref="VSP_052194"/>
    </isoform>
</comment>
<comment type="tissue specificity">
    <text evidence="7 16">Highly expressed in brain, heart, and kidney, and moderately expressed in skeletal muscle. Also expressed in a variety of tumor cell lines and in activated but not resting leukocytes.</text>
</comment>
<comment type="domain">
    <text evidence="12 13">The C-terminal region is necessary for nucleus and cytoplasmic localization (PubMed:19523114). The N-terminal region is necessary for nucleus and nuclear bodies localization (PubMed:19523114). Regions containing Arg-Gly-Gly repeats (RGG/RXR-box) may be preferentially methylated by PRMT1 (PubMed:16879614).</text>
</comment>
<comment type="PTM">
    <text evidence="12">Methylated (PubMed:16879614). Methylation is decreased by phorbol 12-myristate 13-acetate (PMA)-activated PKC, in vitro (PubMed:16879614).</text>
</comment>
<comment type="PTM">
    <text evidence="8">Phosphorylated by phorbol 12-myristate 13-acetate (PMA)-activated PKC isoforms at Thr-354 and Thr-375.</text>
</comment>
<comment type="miscellaneous">
    <text evidence="20">Able to bind hyaluronan. However, its intracellular localization suggests that this interaction may not be relevant in vivo.</text>
</comment>
<comment type="miscellaneous">
    <text evidence="8">The interaction with RACK1 is abolished upon activation of L540 tumor cells with PMA, which results in phosphorylation and exit of HABP4 from the nucleus.</text>
</comment>
<comment type="similarity">
    <text evidence="20">Belongs to the SERBP1-HABP4 family.</text>
</comment>